<organism>
    <name type="scientific">Geobacter sp. (strain M21)</name>
    <dbReference type="NCBI Taxonomy" id="443144"/>
    <lineage>
        <taxon>Bacteria</taxon>
        <taxon>Pseudomonadati</taxon>
        <taxon>Thermodesulfobacteriota</taxon>
        <taxon>Desulfuromonadia</taxon>
        <taxon>Geobacterales</taxon>
        <taxon>Geobacteraceae</taxon>
        <taxon>Geobacter</taxon>
    </lineage>
</organism>
<evidence type="ECO:0000255" key="1">
    <source>
        <dbReference type="HAMAP-Rule" id="MF_00158"/>
    </source>
</evidence>
<accession>C6E3N5</accession>
<name>PANC_GEOSM</name>
<sequence>MIVIHSVAQMQQYARERRGDIALVPTMGYLHEGHASLMVEARKRAKYVVASIFVNPTQFGINEDLDSYPRDLEHDKEIAAKAGVDVIFAPTAADMYPDRYQSYLNVEEITVHLCGASRPGHFRGVTTVVAKLFNIVAPKVAFFGKKDFQQLAVIRRMVRDFNFDIEIVGMPIVREKDGLAMSSRNTKLSPAEREKALCLSRSIAAAKAAFRGGERSVAALQKVAAAVIEAENSPLIDYLEFRDQDSLLPLDKADERTLLALAVRVGSVRLIDNSILGED</sequence>
<proteinExistence type="inferred from homology"/>
<reference key="1">
    <citation type="submission" date="2009-07" db="EMBL/GenBank/DDBJ databases">
        <title>Complete sequence of Geobacter sp. M21.</title>
        <authorList>
            <consortium name="US DOE Joint Genome Institute"/>
            <person name="Lucas S."/>
            <person name="Copeland A."/>
            <person name="Lapidus A."/>
            <person name="Glavina del Rio T."/>
            <person name="Dalin E."/>
            <person name="Tice H."/>
            <person name="Bruce D."/>
            <person name="Goodwin L."/>
            <person name="Pitluck S."/>
            <person name="Saunders E."/>
            <person name="Brettin T."/>
            <person name="Detter J.C."/>
            <person name="Han C."/>
            <person name="Larimer F."/>
            <person name="Land M."/>
            <person name="Hauser L."/>
            <person name="Kyrpides N."/>
            <person name="Ovchinnikova G."/>
            <person name="Lovley D."/>
        </authorList>
    </citation>
    <scope>NUCLEOTIDE SEQUENCE [LARGE SCALE GENOMIC DNA]</scope>
    <source>
        <strain>M21</strain>
    </source>
</reference>
<comment type="function">
    <text evidence="1">Catalyzes the condensation of pantoate with beta-alanine in an ATP-dependent reaction via a pantoyl-adenylate intermediate.</text>
</comment>
<comment type="catalytic activity">
    <reaction evidence="1">
        <text>(R)-pantoate + beta-alanine + ATP = (R)-pantothenate + AMP + diphosphate + H(+)</text>
        <dbReference type="Rhea" id="RHEA:10912"/>
        <dbReference type="ChEBI" id="CHEBI:15378"/>
        <dbReference type="ChEBI" id="CHEBI:15980"/>
        <dbReference type="ChEBI" id="CHEBI:29032"/>
        <dbReference type="ChEBI" id="CHEBI:30616"/>
        <dbReference type="ChEBI" id="CHEBI:33019"/>
        <dbReference type="ChEBI" id="CHEBI:57966"/>
        <dbReference type="ChEBI" id="CHEBI:456215"/>
        <dbReference type="EC" id="6.3.2.1"/>
    </reaction>
</comment>
<comment type="pathway">
    <text evidence="1">Cofactor biosynthesis; (R)-pantothenate biosynthesis; (R)-pantothenate from (R)-pantoate and beta-alanine: step 1/1.</text>
</comment>
<comment type="subunit">
    <text evidence="1">Homodimer.</text>
</comment>
<comment type="subcellular location">
    <subcellularLocation>
        <location evidence="1">Cytoplasm</location>
    </subcellularLocation>
</comment>
<comment type="miscellaneous">
    <text evidence="1">The reaction proceeds by a bi uni uni bi ping pong mechanism.</text>
</comment>
<comment type="similarity">
    <text evidence="1">Belongs to the pantothenate synthetase family.</text>
</comment>
<dbReference type="EC" id="6.3.2.1" evidence="1"/>
<dbReference type="EMBL" id="CP001661">
    <property type="protein sequence ID" value="ACT17300.1"/>
    <property type="molecule type" value="Genomic_DNA"/>
</dbReference>
<dbReference type="SMR" id="C6E3N5"/>
<dbReference type="STRING" id="443144.GM21_1239"/>
<dbReference type="KEGG" id="gem:GM21_1239"/>
<dbReference type="eggNOG" id="COG0414">
    <property type="taxonomic scope" value="Bacteria"/>
</dbReference>
<dbReference type="HOGENOM" id="CLU_047148_0_0_7"/>
<dbReference type="OrthoDB" id="9773087at2"/>
<dbReference type="UniPathway" id="UPA00028">
    <property type="reaction ID" value="UER00005"/>
</dbReference>
<dbReference type="GO" id="GO:0005829">
    <property type="term" value="C:cytosol"/>
    <property type="evidence" value="ECO:0007669"/>
    <property type="project" value="TreeGrafter"/>
</dbReference>
<dbReference type="GO" id="GO:0005524">
    <property type="term" value="F:ATP binding"/>
    <property type="evidence" value="ECO:0007669"/>
    <property type="project" value="UniProtKB-KW"/>
</dbReference>
<dbReference type="GO" id="GO:0004592">
    <property type="term" value="F:pantoate-beta-alanine ligase activity"/>
    <property type="evidence" value="ECO:0007669"/>
    <property type="project" value="UniProtKB-UniRule"/>
</dbReference>
<dbReference type="GO" id="GO:0015940">
    <property type="term" value="P:pantothenate biosynthetic process"/>
    <property type="evidence" value="ECO:0007669"/>
    <property type="project" value="UniProtKB-UniRule"/>
</dbReference>
<dbReference type="CDD" id="cd00560">
    <property type="entry name" value="PanC"/>
    <property type="match status" value="1"/>
</dbReference>
<dbReference type="FunFam" id="3.40.50.620:FF:000013">
    <property type="entry name" value="Pantothenate synthetase"/>
    <property type="match status" value="1"/>
</dbReference>
<dbReference type="Gene3D" id="3.40.50.620">
    <property type="entry name" value="HUPs"/>
    <property type="match status" value="1"/>
</dbReference>
<dbReference type="Gene3D" id="3.30.1300.10">
    <property type="entry name" value="Pantoate-beta-alanine ligase, C-terminal domain"/>
    <property type="match status" value="1"/>
</dbReference>
<dbReference type="HAMAP" id="MF_00158">
    <property type="entry name" value="PanC"/>
    <property type="match status" value="1"/>
</dbReference>
<dbReference type="InterPro" id="IPR003721">
    <property type="entry name" value="Pantoate_ligase"/>
</dbReference>
<dbReference type="InterPro" id="IPR042176">
    <property type="entry name" value="Pantoate_ligase_C"/>
</dbReference>
<dbReference type="InterPro" id="IPR014729">
    <property type="entry name" value="Rossmann-like_a/b/a_fold"/>
</dbReference>
<dbReference type="NCBIfam" id="TIGR00018">
    <property type="entry name" value="panC"/>
    <property type="match status" value="1"/>
</dbReference>
<dbReference type="PANTHER" id="PTHR21299">
    <property type="entry name" value="CYTIDYLATE KINASE/PANTOATE-BETA-ALANINE LIGASE"/>
    <property type="match status" value="1"/>
</dbReference>
<dbReference type="PANTHER" id="PTHR21299:SF1">
    <property type="entry name" value="PANTOATE--BETA-ALANINE LIGASE"/>
    <property type="match status" value="1"/>
</dbReference>
<dbReference type="Pfam" id="PF02569">
    <property type="entry name" value="Pantoate_ligase"/>
    <property type="match status" value="1"/>
</dbReference>
<dbReference type="SUPFAM" id="SSF52374">
    <property type="entry name" value="Nucleotidylyl transferase"/>
    <property type="match status" value="1"/>
</dbReference>
<protein>
    <recommendedName>
        <fullName evidence="1">Pantothenate synthetase</fullName>
        <shortName evidence="1">PS</shortName>
        <ecNumber evidence="1">6.3.2.1</ecNumber>
    </recommendedName>
    <alternativeName>
        <fullName evidence="1">Pantoate--beta-alanine ligase</fullName>
    </alternativeName>
    <alternativeName>
        <fullName evidence="1">Pantoate-activating enzyme</fullName>
    </alternativeName>
</protein>
<feature type="chain" id="PRO_1000203492" description="Pantothenate synthetase">
    <location>
        <begin position="1"/>
        <end position="279"/>
    </location>
</feature>
<feature type="active site" description="Proton donor" evidence="1">
    <location>
        <position position="34"/>
    </location>
</feature>
<feature type="binding site" evidence="1">
    <location>
        <begin position="27"/>
        <end position="34"/>
    </location>
    <ligand>
        <name>ATP</name>
        <dbReference type="ChEBI" id="CHEBI:30616"/>
    </ligand>
</feature>
<feature type="binding site" evidence="1">
    <location>
        <position position="58"/>
    </location>
    <ligand>
        <name>(R)-pantoate</name>
        <dbReference type="ChEBI" id="CHEBI:15980"/>
    </ligand>
</feature>
<feature type="binding site" evidence="1">
    <location>
        <position position="58"/>
    </location>
    <ligand>
        <name>beta-alanine</name>
        <dbReference type="ChEBI" id="CHEBI:57966"/>
    </ligand>
</feature>
<feature type="binding site" evidence="1">
    <location>
        <begin position="144"/>
        <end position="147"/>
    </location>
    <ligand>
        <name>ATP</name>
        <dbReference type="ChEBI" id="CHEBI:30616"/>
    </ligand>
</feature>
<feature type="binding site" evidence="1">
    <location>
        <position position="150"/>
    </location>
    <ligand>
        <name>(R)-pantoate</name>
        <dbReference type="ChEBI" id="CHEBI:15980"/>
    </ligand>
</feature>
<feature type="binding site" evidence="1">
    <location>
        <position position="173"/>
    </location>
    <ligand>
        <name>ATP</name>
        <dbReference type="ChEBI" id="CHEBI:30616"/>
    </ligand>
</feature>
<feature type="binding site" evidence="1">
    <location>
        <begin position="181"/>
        <end position="184"/>
    </location>
    <ligand>
        <name>ATP</name>
        <dbReference type="ChEBI" id="CHEBI:30616"/>
    </ligand>
</feature>
<gene>
    <name evidence="1" type="primary">panC</name>
    <name type="ordered locus">GM21_1239</name>
</gene>
<keyword id="KW-0067">ATP-binding</keyword>
<keyword id="KW-0963">Cytoplasm</keyword>
<keyword id="KW-0436">Ligase</keyword>
<keyword id="KW-0547">Nucleotide-binding</keyword>
<keyword id="KW-0566">Pantothenate biosynthesis</keyword>